<keyword id="KW-0998">Cell outer membrane</keyword>
<keyword id="KW-0184">Conjugation</keyword>
<keyword id="KW-0472">Membrane</keyword>
<keyword id="KW-0614">Plasmid</keyword>
<feature type="chain" id="PRO_0000068466" description="Protein TraL">
    <location>
        <begin position="1"/>
        <end position="101"/>
    </location>
</feature>
<proteinExistence type="predicted"/>
<evidence type="ECO:0000305" key="1"/>
<geneLocation type="plasmid">
    <name>IncFV pED208</name>
</geneLocation>
<name>TRAL_SALTI</name>
<gene>
    <name type="primary">traL</name>
</gene>
<reference key="1">
    <citation type="journal article" date="1986" name="J. Bacteriol.">
        <title>Nucleotide sequence of the tra YALE region from IncFV plasmid pED208.</title>
        <authorList>
            <person name="Finlay B.B."/>
            <person name="Frost L.S."/>
            <person name="Paranchych W."/>
        </authorList>
    </citation>
    <scope>NUCLEOTIDE SEQUENCE [GENOMIC DNA]</scope>
</reference>
<dbReference type="EMBL" id="M14733">
    <property type="protein sequence ID" value="AAA25608.1"/>
    <property type="molecule type" value="Genomic_DNA"/>
</dbReference>
<dbReference type="RefSeq" id="WP_032490353.1">
    <property type="nucleotide sequence ID" value="NZ_AF411480.1"/>
</dbReference>
<dbReference type="SMR" id="P12058"/>
<dbReference type="GO" id="GO:0009279">
    <property type="term" value="C:cell outer membrane"/>
    <property type="evidence" value="ECO:0007669"/>
    <property type="project" value="UniProtKB-SubCell"/>
</dbReference>
<dbReference type="GO" id="GO:0009297">
    <property type="term" value="P:pilus assembly"/>
    <property type="evidence" value="ECO:0007669"/>
    <property type="project" value="InterPro"/>
</dbReference>
<dbReference type="InterPro" id="IPR016382">
    <property type="entry name" value="Pilus_assmbly_TraL"/>
</dbReference>
<dbReference type="InterPro" id="IPR009838">
    <property type="entry name" value="T4SS_TraL"/>
</dbReference>
<dbReference type="NCBIfam" id="TIGR02762">
    <property type="entry name" value="TraL_TIGR"/>
    <property type="match status" value="1"/>
</dbReference>
<dbReference type="Pfam" id="PF07178">
    <property type="entry name" value="TraL"/>
    <property type="match status" value="1"/>
</dbReference>
<dbReference type="PIRSF" id="PIRSF003259">
    <property type="entry name" value="Pilus_assembly_TraL"/>
    <property type="match status" value="1"/>
</dbReference>
<sequence>MEGNDLDKYRFPKTLSEQNRIIGLPLDEAIPAAVVLLWGFFTKKYLFSLIIAAVIWQLIRAAKCGKSSRWLYNWCYWYLPTELFRVVYRVIPDSSFRKWIK</sequence>
<organism>
    <name type="scientific">Salmonella typhi</name>
    <dbReference type="NCBI Taxonomy" id="90370"/>
    <lineage>
        <taxon>Bacteria</taxon>
        <taxon>Pseudomonadati</taxon>
        <taxon>Pseudomonadota</taxon>
        <taxon>Gammaproteobacteria</taxon>
        <taxon>Enterobacterales</taxon>
        <taxon>Enterobacteriaceae</taxon>
        <taxon>Salmonella</taxon>
    </lineage>
</organism>
<protein>
    <recommendedName>
        <fullName>Protein TraL</fullName>
    </recommendedName>
</protein>
<accession>P12058</accession>
<comment type="function">
    <text>Membrane protein involved in F pilin formation.</text>
</comment>
<comment type="subcellular location">
    <subcellularLocation>
        <location evidence="1">Cell outer membrane</location>
        <topology evidence="1">Peripheral membrane protein</topology>
    </subcellularLocation>
</comment>